<organism>
    <name type="scientific">Mycobacterium ulcerans (strain Agy99)</name>
    <dbReference type="NCBI Taxonomy" id="362242"/>
    <lineage>
        <taxon>Bacteria</taxon>
        <taxon>Bacillati</taxon>
        <taxon>Actinomycetota</taxon>
        <taxon>Actinomycetes</taxon>
        <taxon>Mycobacteriales</taxon>
        <taxon>Mycobacteriaceae</taxon>
        <taxon>Mycobacterium</taxon>
        <taxon>Mycobacterium ulcerans group</taxon>
    </lineage>
</organism>
<proteinExistence type="inferred from homology"/>
<name>RS14Z_MYCUA</name>
<gene>
    <name evidence="1" type="primary">rpsZ</name>
    <name evidence="1" type="synonym">rpsN</name>
    <name type="ordered locus">MUL_0807</name>
</gene>
<feature type="chain" id="PRO_1000067957" description="Small ribosomal subunit protein uS14B">
    <location>
        <begin position="1"/>
        <end position="61"/>
    </location>
</feature>
<feature type="binding site" evidence="1">
    <location>
        <position position="24"/>
    </location>
    <ligand>
        <name>Zn(2+)</name>
        <dbReference type="ChEBI" id="CHEBI:29105"/>
    </ligand>
</feature>
<feature type="binding site" evidence="1">
    <location>
        <position position="27"/>
    </location>
    <ligand>
        <name>Zn(2+)</name>
        <dbReference type="ChEBI" id="CHEBI:29105"/>
    </ligand>
</feature>
<feature type="binding site" evidence="1">
    <location>
        <position position="40"/>
    </location>
    <ligand>
        <name>Zn(2+)</name>
        <dbReference type="ChEBI" id="CHEBI:29105"/>
    </ligand>
</feature>
<feature type="binding site" evidence="1">
    <location>
        <position position="43"/>
    </location>
    <ligand>
        <name>Zn(2+)</name>
        <dbReference type="ChEBI" id="CHEBI:29105"/>
    </ligand>
</feature>
<dbReference type="EMBL" id="CP000325">
    <property type="protein sequence ID" value="ABL03447.1"/>
    <property type="molecule type" value="Genomic_DNA"/>
</dbReference>
<dbReference type="RefSeq" id="WP_011739072.1">
    <property type="nucleotide sequence ID" value="NC_008611.1"/>
</dbReference>
<dbReference type="SMR" id="A0PM78"/>
<dbReference type="KEGG" id="mul:MUL_0807"/>
<dbReference type="eggNOG" id="COG0199">
    <property type="taxonomic scope" value="Bacteria"/>
</dbReference>
<dbReference type="HOGENOM" id="CLU_139869_3_0_11"/>
<dbReference type="Proteomes" id="UP000000765">
    <property type="component" value="Chromosome"/>
</dbReference>
<dbReference type="GO" id="GO:0005737">
    <property type="term" value="C:cytoplasm"/>
    <property type="evidence" value="ECO:0007669"/>
    <property type="project" value="UniProtKB-ARBA"/>
</dbReference>
<dbReference type="GO" id="GO:0015935">
    <property type="term" value="C:small ribosomal subunit"/>
    <property type="evidence" value="ECO:0007669"/>
    <property type="project" value="TreeGrafter"/>
</dbReference>
<dbReference type="GO" id="GO:0019843">
    <property type="term" value="F:rRNA binding"/>
    <property type="evidence" value="ECO:0007669"/>
    <property type="project" value="UniProtKB-UniRule"/>
</dbReference>
<dbReference type="GO" id="GO:0003735">
    <property type="term" value="F:structural constituent of ribosome"/>
    <property type="evidence" value="ECO:0007669"/>
    <property type="project" value="InterPro"/>
</dbReference>
<dbReference type="GO" id="GO:0008270">
    <property type="term" value="F:zinc ion binding"/>
    <property type="evidence" value="ECO:0007669"/>
    <property type="project" value="UniProtKB-UniRule"/>
</dbReference>
<dbReference type="GO" id="GO:0006412">
    <property type="term" value="P:translation"/>
    <property type="evidence" value="ECO:0007669"/>
    <property type="project" value="UniProtKB-UniRule"/>
</dbReference>
<dbReference type="FunFam" id="4.10.830.10:FF:000001">
    <property type="entry name" value="30S ribosomal protein S14 type Z"/>
    <property type="match status" value="1"/>
</dbReference>
<dbReference type="Gene3D" id="4.10.830.10">
    <property type="entry name" value="30s Ribosomal Protein S14, Chain N"/>
    <property type="match status" value="1"/>
</dbReference>
<dbReference type="HAMAP" id="MF_01364_B">
    <property type="entry name" value="Ribosomal_uS14_2_B"/>
    <property type="match status" value="1"/>
</dbReference>
<dbReference type="InterPro" id="IPR001209">
    <property type="entry name" value="Ribosomal_uS14"/>
</dbReference>
<dbReference type="InterPro" id="IPR023053">
    <property type="entry name" value="Ribosomal_uS14_bact"/>
</dbReference>
<dbReference type="InterPro" id="IPR018271">
    <property type="entry name" value="Ribosomal_uS14_CS"/>
</dbReference>
<dbReference type="InterPro" id="IPR043140">
    <property type="entry name" value="Ribosomal_uS14_sf"/>
</dbReference>
<dbReference type="NCBIfam" id="NF005974">
    <property type="entry name" value="PRK08061.1"/>
    <property type="match status" value="1"/>
</dbReference>
<dbReference type="PANTHER" id="PTHR19836">
    <property type="entry name" value="30S RIBOSOMAL PROTEIN S14"/>
    <property type="match status" value="1"/>
</dbReference>
<dbReference type="PANTHER" id="PTHR19836:SF19">
    <property type="entry name" value="SMALL RIBOSOMAL SUBUNIT PROTEIN US14M"/>
    <property type="match status" value="1"/>
</dbReference>
<dbReference type="Pfam" id="PF00253">
    <property type="entry name" value="Ribosomal_S14"/>
    <property type="match status" value="1"/>
</dbReference>
<dbReference type="SUPFAM" id="SSF57716">
    <property type="entry name" value="Glucocorticoid receptor-like (DNA-binding domain)"/>
    <property type="match status" value="1"/>
</dbReference>
<dbReference type="PROSITE" id="PS00527">
    <property type="entry name" value="RIBOSOMAL_S14"/>
    <property type="match status" value="1"/>
</dbReference>
<protein>
    <recommendedName>
        <fullName evidence="1">Small ribosomal subunit protein uS14B</fullName>
    </recommendedName>
    <alternativeName>
        <fullName evidence="2">30S ribosomal protein S14 type Z</fullName>
    </alternativeName>
</protein>
<evidence type="ECO:0000255" key="1">
    <source>
        <dbReference type="HAMAP-Rule" id="MF_01364"/>
    </source>
</evidence>
<evidence type="ECO:0000305" key="2"/>
<comment type="function">
    <text evidence="1">Binds 16S rRNA, required for the assembly of 30S particles and may also be responsible for determining the conformation of the 16S rRNA at the A site.</text>
</comment>
<comment type="cofactor">
    <cofactor evidence="1">
        <name>Zn(2+)</name>
        <dbReference type="ChEBI" id="CHEBI:29105"/>
    </cofactor>
    <text evidence="1">Binds 1 zinc ion per subunit.</text>
</comment>
<comment type="subunit">
    <text evidence="1">Part of the 30S ribosomal subunit. Contacts proteins S3 and S10.</text>
</comment>
<comment type="similarity">
    <text evidence="1">Belongs to the universal ribosomal protein uS14 family. Zinc-binding uS14 subfamily.</text>
</comment>
<reference key="1">
    <citation type="journal article" date="2007" name="Genome Res.">
        <title>Reductive evolution and niche adaptation inferred from the genome of Mycobacterium ulcerans, the causative agent of Buruli ulcer.</title>
        <authorList>
            <person name="Stinear T.P."/>
            <person name="Seemann T."/>
            <person name="Pidot S."/>
            <person name="Frigui W."/>
            <person name="Reysset G."/>
            <person name="Garnier T."/>
            <person name="Meurice G."/>
            <person name="Simon D."/>
            <person name="Bouchier C."/>
            <person name="Ma L."/>
            <person name="Tichit M."/>
            <person name="Porter J.L."/>
            <person name="Ryan J."/>
            <person name="Johnson P.D.R."/>
            <person name="Davies J.K."/>
            <person name="Jenkin G.A."/>
            <person name="Small P.L.C."/>
            <person name="Jones L.M."/>
            <person name="Tekaia F."/>
            <person name="Laval F."/>
            <person name="Daffe M."/>
            <person name="Parkhill J."/>
            <person name="Cole S.T."/>
        </authorList>
    </citation>
    <scope>NUCLEOTIDE SEQUENCE [LARGE SCALE GENOMIC DNA]</scope>
    <source>
        <strain>Agy99</strain>
    </source>
</reference>
<keyword id="KW-0479">Metal-binding</keyword>
<keyword id="KW-0687">Ribonucleoprotein</keyword>
<keyword id="KW-0689">Ribosomal protein</keyword>
<keyword id="KW-0694">RNA-binding</keyword>
<keyword id="KW-0699">rRNA-binding</keyword>
<keyword id="KW-0862">Zinc</keyword>
<sequence length="61" mass="6866">MAKKALVNKAARKPKFAVRGYTRCSKCGRPRAVFRKFGLCRICLREMAHAGELPGVQKSSW</sequence>
<accession>A0PM78</accession>